<organism>
    <name type="scientific">Campylobacter jejuni subsp. jejuni serotype O:6 (strain 81116 / NCTC 11828)</name>
    <dbReference type="NCBI Taxonomy" id="407148"/>
    <lineage>
        <taxon>Bacteria</taxon>
        <taxon>Pseudomonadati</taxon>
        <taxon>Campylobacterota</taxon>
        <taxon>Epsilonproteobacteria</taxon>
        <taxon>Campylobacterales</taxon>
        <taxon>Campylobacteraceae</taxon>
        <taxon>Campylobacter</taxon>
    </lineage>
</organism>
<keyword id="KW-1003">Cell membrane</keyword>
<keyword id="KW-0255">Endonuclease</keyword>
<keyword id="KW-0378">Hydrolase</keyword>
<keyword id="KW-0472">Membrane</keyword>
<keyword id="KW-0540">Nuclease</keyword>
<keyword id="KW-0694">RNA-binding</keyword>
<keyword id="KW-0812">Transmembrane</keyword>
<keyword id="KW-1133">Transmembrane helix</keyword>
<protein>
    <recommendedName>
        <fullName evidence="1">Ribonuclease Y</fullName>
        <shortName evidence="1">RNase Y</shortName>
        <ecNumber evidence="1">3.1.-.-</ecNumber>
    </recommendedName>
</protein>
<dbReference type="EC" id="3.1.-.-" evidence="1"/>
<dbReference type="EMBL" id="CP000814">
    <property type="protein sequence ID" value="ABV52751.1"/>
    <property type="molecule type" value="Genomic_DNA"/>
</dbReference>
<dbReference type="RefSeq" id="WP_002853829.1">
    <property type="nucleotide sequence ID" value="NC_009839.1"/>
</dbReference>
<dbReference type="SMR" id="A8FMR4"/>
<dbReference type="KEGG" id="cju:C8J_1152"/>
<dbReference type="HOGENOM" id="CLU_028328_1_0_7"/>
<dbReference type="GO" id="GO:0005886">
    <property type="term" value="C:plasma membrane"/>
    <property type="evidence" value="ECO:0007669"/>
    <property type="project" value="UniProtKB-SubCell"/>
</dbReference>
<dbReference type="GO" id="GO:0003723">
    <property type="term" value="F:RNA binding"/>
    <property type="evidence" value="ECO:0007669"/>
    <property type="project" value="UniProtKB-UniRule"/>
</dbReference>
<dbReference type="GO" id="GO:0004521">
    <property type="term" value="F:RNA endonuclease activity"/>
    <property type="evidence" value="ECO:0007669"/>
    <property type="project" value="UniProtKB-UniRule"/>
</dbReference>
<dbReference type="GO" id="GO:0006402">
    <property type="term" value="P:mRNA catabolic process"/>
    <property type="evidence" value="ECO:0007669"/>
    <property type="project" value="UniProtKB-UniRule"/>
</dbReference>
<dbReference type="CDD" id="cd00077">
    <property type="entry name" value="HDc"/>
    <property type="match status" value="1"/>
</dbReference>
<dbReference type="CDD" id="cd22431">
    <property type="entry name" value="KH-I_RNaseY"/>
    <property type="match status" value="1"/>
</dbReference>
<dbReference type="Gene3D" id="1.10.3210.10">
    <property type="entry name" value="Hypothetical protein af1432"/>
    <property type="match status" value="1"/>
</dbReference>
<dbReference type="Gene3D" id="3.30.1370.10">
    <property type="entry name" value="K Homology domain, type 1"/>
    <property type="match status" value="1"/>
</dbReference>
<dbReference type="HAMAP" id="MF_00335">
    <property type="entry name" value="RNase_Y"/>
    <property type="match status" value="1"/>
</dbReference>
<dbReference type="InterPro" id="IPR003607">
    <property type="entry name" value="HD/PDEase_dom"/>
</dbReference>
<dbReference type="InterPro" id="IPR006674">
    <property type="entry name" value="HD_domain"/>
</dbReference>
<dbReference type="InterPro" id="IPR006675">
    <property type="entry name" value="HDIG_dom"/>
</dbReference>
<dbReference type="InterPro" id="IPR036612">
    <property type="entry name" value="KH_dom_type_1_sf"/>
</dbReference>
<dbReference type="InterPro" id="IPR017705">
    <property type="entry name" value="Ribonuclease_Y"/>
</dbReference>
<dbReference type="InterPro" id="IPR022711">
    <property type="entry name" value="RNase_Y_N"/>
</dbReference>
<dbReference type="NCBIfam" id="TIGR00277">
    <property type="entry name" value="HDIG"/>
    <property type="match status" value="1"/>
</dbReference>
<dbReference type="NCBIfam" id="TIGR03319">
    <property type="entry name" value="RNase_Y"/>
    <property type="match status" value="1"/>
</dbReference>
<dbReference type="PANTHER" id="PTHR12826">
    <property type="entry name" value="RIBONUCLEASE Y"/>
    <property type="match status" value="1"/>
</dbReference>
<dbReference type="PANTHER" id="PTHR12826:SF15">
    <property type="entry name" value="RIBONUCLEASE Y"/>
    <property type="match status" value="1"/>
</dbReference>
<dbReference type="Pfam" id="PF01966">
    <property type="entry name" value="HD"/>
    <property type="match status" value="1"/>
</dbReference>
<dbReference type="Pfam" id="PF12072">
    <property type="entry name" value="RNase_Y_N"/>
    <property type="match status" value="1"/>
</dbReference>
<dbReference type="SMART" id="SM00471">
    <property type="entry name" value="HDc"/>
    <property type="match status" value="1"/>
</dbReference>
<dbReference type="SUPFAM" id="SSF54791">
    <property type="entry name" value="Eukaryotic type KH-domain (KH-domain type I)"/>
    <property type="match status" value="1"/>
</dbReference>
<dbReference type="SUPFAM" id="SSF109604">
    <property type="entry name" value="HD-domain/PDEase-like"/>
    <property type="match status" value="1"/>
</dbReference>
<dbReference type="PROSITE" id="PS51831">
    <property type="entry name" value="HD"/>
    <property type="match status" value="1"/>
</dbReference>
<evidence type="ECO:0000255" key="1">
    <source>
        <dbReference type="HAMAP-Rule" id="MF_00335"/>
    </source>
</evidence>
<evidence type="ECO:0000255" key="2">
    <source>
        <dbReference type="PROSITE-ProRule" id="PRU01175"/>
    </source>
</evidence>
<feature type="chain" id="PRO_0000344839" description="Ribonuclease Y">
    <location>
        <begin position="1"/>
        <end position="517"/>
    </location>
</feature>
<feature type="transmembrane region" description="Helical" evidence="1">
    <location>
        <begin position="1"/>
        <end position="21"/>
    </location>
</feature>
<feature type="domain" description="KH" evidence="1">
    <location>
        <begin position="207"/>
        <end position="273"/>
    </location>
</feature>
<feature type="domain" description="HD" evidence="2">
    <location>
        <begin position="333"/>
        <end position="426"/>
    </location>
</feature>
<proteinExistence type="inferred from homology"/>
<reference key="1">
    <citation type="journal article" date="2007" name="J. Bacteriol.">
        <title>The complete genome sequence of Campylobacter jejuni strain 81116 (NCTC11828).</title>
        <authorList>
            <person name="Pearson B.M."/>
            <person name="Gaskin D.J.H."/>
            <person name="Segers R.P.A.M."/>
            <person name="Wells J.M."/>
            <person name="Nuijten P.J.M."/>
            <person name="van Vliet A.H.M."/>
        </authorList>
    </citation>
    <scope>NUCLEOTIDE SEQUENCE [LARGE SCALE GENOMIC DNA]</scope>
    <source>
        <strain>81116 / NCTC 11828</strain>
    </source>
</reference>
<sequence length="517" mass="57993">MIESLIALIAAIVGLGIGYLVAKKINDAKYEIFVEQAKAKAKAIEYEAELILKDAKNSILNAELEVKKKYEEKTHKIQKDFNQKFDDLSKKEQKLQQEEEKLKEDKEYLCKSQKHIQDLQSDVDKLKNKYQEKLDDVLKILEHSTGLTQNEAKEIILKKVEENSREQIAHIVRKYEEEAKNEAKRKANFIIAQATSRFAGEFAAERLINVINIKNDELKGRIIGKEGRNVKTLEMVLGVDIIIDDTPGAIIVSCFNLYRRAIATKVIELLVEDGRIQPARIEEIHEKVCKEFDSAILEEGETIVMDLGLNKIHPEIVKLIGKLKYRASYGQNALAHSLEVAHLAGIIAAECGGDENLARRAGILHDIGKALTHDFEGSHVDLGAELCKRYKEHPVVINAIYAHHGHEEATSIESAAVCAADTLSAARPGARREVLEAFLKRVSELEDIAKSKEGIKNAYAINAGREIRVIANAQLVNDDESVLLAKEIAAEIQEKMQYPGEIKVNVIRELRAVEYAK</sequence>
<name>RNY_CAMJ8</name>
<gene>
    <name evidence="1" type="primary">rny</name>
    <name type="ordered locus">C8J_1152</name>
</gene>
<comment type="function">
    <text evidence="1">Endoribonuclease that initiates mRNA decay.</text>
</comment>
<comment type="subcellular location">
    <subcellularLocation>
        <location evidence="1">Cell membrane</location>
        <topology evidence="1">Single-pass membrane protein</topology>
    </subcellularLocation>
</comment>
<comment type="similarity">
    <text evidence="1">Belongs to the RNase Y family.</text>
</comment>
<accession>A8FMR4</accession>